<feature type="chain" id="PRO_0000348593" description="Cytosolic arginine sensor for mTORC1 subunit 1">
    <location>
        <begin position="1"/>
        <end position="331"/>
    </location>
</feature>
<feature type="domain" description="ACT 1">
    <location>
        <begin position="72"/>
        <end position="139"/>
    </location>
</feature>
<feature type="domain" description="ACT 2">
    <location>
        <begin position="262"/>
        <end position="322"/>
    </location>
</feature>
<feature type="region of interest" description="Disordered" evidence="2">
    <location>
        <begin position="155"/>
        <end position="174"/>
    </location>
</feature>
<feature type="compositionally biased region" description="Polar residues" evidence="2">
    <location>
        <begin position="156"/>
        <end position="174"/>
    </location>
</feature>
<feature type="binding site" evidence="1">
    <location>
        <begin position="110"/>
        <end position="111"/>
    </location>
    <ligand>
        <name>L-arginine</name>
        <dbReference type="ChEBI" id="CHEBI:32682"/>
    </ligand>
</feature>
<feature type="binding site" evidence="1">
    <location>
        <position position="273"/>
    </location>
    <ligand>
        <name>L-arginine</name>
        <dbReference type="ChEBI" id="CHEBI:32682"/>
    </ligand>
</feature>
<feature type="binding site" evidence="1">
    <location>
        <begin position="279"/>
        <end position="280"/>
    </location>
    <ligand>
        <name>L-arginine</name>
        <dbReference type="ChEBI" id="CHEBI:32682"/>
    </ligand>
</feature>
<feature type="binding site" evidence="1">
    <location>
        <begin position="299"/>
        <end position="303"/>
    </location>
    <ligand>
        <name>L-arginine</name>
        <dbReference type="ChEBI" id="CHEBI:32682"/>
    </ligand>
</feature>
<feature type="modified residue" description="Phosphoserine" evidence="1">
    <location>
        <position position="14"/>
    </location>
</feature>
<dbReference type="EMBL" id="BC091274">
    <property type="protein sequence ID" value="AAH91274.1"/>
    <property type="molecule type" value="mRNA"/>
</dbReference>
<dbReference type="RefSeq" id="NP_001020299.1">
    <property type="nucleotide sequence ID" value="NM_001025128.1"/>
</dbReference>
<dbReference type="RefSeq" id="XP_006251397.1">
    <property type="nucleotide sequence ID" value="XM_006251335.3"/>
</dbReference>
<dbReference type="RefSeq" id="XP_006251398.1">
    <property type="nucleotide sequence ID" value="XM_006251336.3"/>
</dbReference>
<dbReference type="SMR" id="Q5BJZ0"/>
<dbReference type="FunCoup" id="Q5BJZ0">
    <property type="interactions" value="146"/>
</dbReference>
<dbReference type="STRING" id="10116.ENSRNOP00000009150"/>
<dbReference type="PhosphoSitePlus" id="Q5BJZ0"/>
<dbReference type="PaxDb" id="10116-ENSRNOP00000009150"/>
<dbReference type="Ensembl" id="ENSRNOT00000009150.7">
    <property type="protein sequence ID" value="ENSRNOP00000009150.4"/>
    <property type="gene ID" value="ENSRNOG00000006740.7"/>
</dbReference>
<dbReference type="GeneID" id="360969"/>
<dbReference type="KEGG" id="rno:360969"/>
<dbReference type="UCSC" id="RGD:1304774">
    <property type="organism name" value="rat"/>
</dbReference>
<dbReference type="AGR" id="RGD:1304774"/>
<dbReference type="CTD" id="652968"/>
<dbReference type="RGD" id="1304774">
    <property type="gene designation" value="Castor1"/>
</dbReference>
<dbReference type="eggNOG" id="ENOG502QV83">
    <property type="taxonomic scope" value="Eukaryota"/>
</dbReference>
<dbReference type="GeneTree" id="ENSGT00390000006208"/>
<dbReference type="HOGENOM" id="CLU_057799_0_0_1"/>
<dbReference type="InParanoid" id="Q5BJZ0"/>
<dbReference type="OMA" id="HFTHPLI"/>
<dbReference type="OrthoDB" id="58529at2759"/>
<dbReference type="PhylomeDB" id="Q5BJZ0"/>
<dbReference type="TreeFam" id="TF331648"/>
<dbReference type="Reactome" id="R-RNO-9639288">
    <property type="pathway name" value="Amino acids regulate mTORC1"/>
</dbReference>
<dbReference type="PRO" id="PR:Q5BJZ0"/>
<dbReference type="Proteomes" id="UP000002494">
    <property type="component" value="Chromosome 14"/>
</dbReference>
<dbReference type="Bgee" id="ENSRNOG00000006740">
    <property type="expression patterns" value="Expressed in adult mammalian kidney and 18 other cell types or tissues"/>
</dbReference>
<dbReference type="GO" id="GO:0005829">
    <property type="term" value="C:cytosol"/>
    <property type="evidence" value="ECO:0000250"/>
    <property type="project" value="UniProtKB"/>
</dbReference>
<dbReference type="GO" id="GO:0061700">
    <property type="term" value="C:GATOR2 complex"/>
    <property type="evidence" value="ECO:0000266"/>
    <property type="project" value="RGD"/>
</dbReference>
<dbReference type="GO" id="GO:0034618">
    <property type="term" value="F:arginine binding"/>
    <property type="evidence" value="ECO:0000250"/>
    <property type="project" value="UniProtKB"/>
</dbReference>
<dbReference type="GO" id="GO:0042802">
    <property type="term" value="F:identical protein binding"/>
    <property type="evidence" value="ECO:0000266"/>
    <property type="project" value="RGD"/>
</dbReference>
<dbReference type="GO" id="GO:0140299">
    <property type="term" value="F:molecular sensor activity"/>
    <property type="evidence" value="ECO:0000266"/>
    <property type="project" value="RGD"/>
</dbReference>
<dbReference type="GO" id="GO:0140311">
    <property type="term" value="F:protein sequestering activity"/>
    <property type="evidence" value="ECO:0000250"/>
    <property type="project" value="UniProtKB"/>
</dbReference>
<dbReference type="GO" id="GO:0034198">
    <property type="term" value="P:cellular response to amino acid starvation"/>
    <property type="evidence" value="ECO:0000266"/>
    <property type="project" value="RGD"/>
</dbReference>
<dbReference type="GO" id="GO:1903577">
    <property type="term" value="P:cellular response to L-arginine"/>
    <property type="evidence" value="ECO:0000250"/>
    <property type="project" value="UniProtKB"/>
</dbReference>
<dbReference type="GO" id="GO:1904262">
    <property type="term" value="P:negative regulation of TORC1 signaling"/>
    <property type="evidence" value="ECO:0000250"/>
    <property type="project" value="UniProtKB"/>
</dbReference>
<dbReference type="GO" id="GO:1904263">
    <property type="term" value="P:positive regulation of TORC1 signaling"/>
    <property type="evidence" value="ECO:0000266"/>
    <property type="project" value="RGD"/>
</dbReference>
<dbReference type="FunFam" id="3.30.2130.10:FF:000003">
    <property type="entry name" value="Cytosolic arginine sensor for mTORC1 subunit 1"/>
    <property type="match status" value="1"/>
</dbReference>
<dbReference type="FunFam" id="3.30.2130.10:FF:000004">
    <property type="entry name" value="Cytosolic arginine sensor for mTORC1 subunit 1"/>
    <property type="match status" value="1"/>
</dbReference>
<dbReference type="Gene3D" id="3.30.2130.10">
    <property type="entry name" value="VC0802-like"/>
    <property type="match status" value="2"/>
</dbReference>
<dbReference type="InterPro" id="IPR045865">
    <property type="entry name" value="ACT-like_dom_sf"/>
</dbReference>
<dbReference type="InterPro" id="IPR049479">
    <property type="entry name" value="CASTOR1_ACT-like"/>
</dbReference>
<dbReference type="InterPro" id="IPR040778">
    <property type="entry name" value="CASTOR1_N"/>
</dbReference>
<dbReference type="InterPro" id="IPR027795">
    <property type="entry name" value="CASTOR_ACT_dom"/>
</dbReference>
<dbReference type="InterPro" id="IPR026249">
    <property type="entry name" value="CASTOR_fam"/>
</dbReference>
<dbReference type="InterPro" id="IPR051719">
    <property type="entry name" value="CASTOR_mTORC1"/>
</dbReference>
<dbReference type="PANTHER" id="PTHR31131">
    <property type="entry name" value="CHROMOSOME 1, WHOLE GENOME SHOTGUN SEQUENCE"/>
    <property type="match status" value="1"/>
</dbReference>
<dbReference type="PANTHER" id="PTHR31131:SF3">
    <property type="entry name" value="CYTOSOLIC ARGININE SENSOR FOR MTORC1 SUBUNIT 1"/>
    <property type="match status" value="1"/>
</dbReference>
<dbReference type="Pfam" id="PF13840">
    <property type="entry name" value="ACT_7"/>
    <property type="match status" value="2"/>
</dbReference>
<dbReference type="Pfam" id="PF21389">
    <property type="entry name" value="CASTOR1_ACT-like"/>
    <property type="match status" value="1"/>
</dbReference>
<dbReference type="Pfam" id="PF18700">
    <property type="entry name" value="Castor1_N"/>
    <property type="match status" value="1"/>
</dbReference>
<dbReference type="PRINTS" id="PR02078">
    <property type="entry name" value="GATSLIKEFMLY"/>
</dbReference>
<dbReference type="SUPFAM" id="SSF55021">
    <property type="entry name" value="ACT-like"/>
    <property type="match status" value="2"/>
</dbReference>
<name>CAST1_RAT</name>
<proteinExistence type="evidence at transcript level"/>
<sequence length="331" mass="36476">MELHILEHRVRVLSLARPGLWLYTHPLIKLLFLPSRSRCKFFSLTETPEDYTLMVDEEGFKELPPSEFLQVAEATWLVMNVSHSGSVVQAAGVTKIARSVIAPLAEHHVSVLMLSTYQTDFILVREQDLSVVIHTLAREFQIYREVGGEPVPVTGDDSSNGFPQAQHGPSPTVHPIQSPQNRFCVLTLDPETLPAVATTLIDVLFYSHSVPKEAASGGPESTSIPFFAFSLIEGYISIVMDAETQKKFPSDLLLTSSSGELWRMVRIGGQPLGFDECGIVAQIAGPLAAVDVSAYYISTFNFDHALVPEDEISCVIDILQRRQEGLASKDP</sequence>
<keyword id="KW-0963">Cytoplasm</keyword>
<keyword id="KW-0597">Phosphoprotein</keyword>
<keyword id="KW-1185">Reference proteome</keyword>
<keyword id="KW-0832">Ubl conjugation</keyword>
<organism>
    <name type="scientific">Rattus norvegicus</name>
    <name type="common">Rat</name>
    <dbReference type="NCBI Taxonomy" id="10116"/>
    <lineage>
        <taxon>Eukaryota</taxon>
        <taxon>Metazoa</taxon>
        <taxon>Chordata</taxon>
        <taxon>Craniata</taxon>
        <taxon>Vertebrata</taxon>
        <taxon>Euteleostomi</taxon>
        <taxon>Mammalia</taxon>
        <taxon>Eutheria</taxon>
        <taxon>Euarchontoglires</taxon>
        <taxon>Glires</taxon>
        <taxon>Rodentia</taxon>
        <taxon>Myomorpha</taxon>
        <taxon>Muroidea</taxon>
        <taxon>Muridae</taxon>
        <taxon>Murinae</taxon>
        <taxon>Rattus</taxon>
    </lineage>
</organism>
<reference key="1">
    <citation type="journal article" date="2004" name="Genome Res.">
        <title>The status, quality, and expansion of the NIH full-length cDNA project: the Mammalian Gene Collection (MGC).</title>
        <authorList>
            <consortium name="The MGC Project Team"/>
        </authorList>
    </citation>
    <scope>NUCLEOTIDE SEQUENCE [LARGE SCALE MRNA]</scope>
    <source>
        <tissue>Thymus</tissue>
    </source>
</reference>
<evidence type="ECO:0000250" key="1">
    <source>
        <dbReference type="UniProtKB" id="Q8WTX7"/>
    </source>
</evidence>
<evidence type="ECO:0000256" key="2">
    <source>
        <dbReference type="SAM" id="MobiDB-lite"/>
    </source>
</evidence>
<evidence type="ECO:0000305" key="3"/>
<evidence type="ECO:0000312" key="4">
    <source>
        <dbReference type="RGD" id="1304774"/>
    </source>
</evidence>
<protein>
    <recommendedName>
        <fullName evidence="4">Cytosolic arginine sensor for mTORC1 subunit 1</fullName>
    </recommendedName>
    <alternativeName>
        <fullName evidence="3">GATS-like protein 3</fullName>
    </alternativeName>
</protein>
<gene>
    <name evidence="4" type="primary">Castor1</name>
    <name evidence="4" type="synonym">Gatsl3</name>
</gene>
<accession>Q5BJZ0</accession>
<comment type="function">
    <text evidence="1">Functions as an intracellular arginine sensor within the amino acid-sensing branch of the TORC1 signaling pathway. As a homodimer or a heterodimer with CASTOR2, binds and inhibits the GATOR subcomplex GATOR2 and thereby mTORC1. Binding of arginine to CASTOR1 allosterically disrupts the interaction of CASTOR1-containing dimers with GATOR2 which can in turn activate mTORC1 and the TORC1 signaling pathway.</text>
</comment>
<comment type="subunit">
    <text evidence="1">Forms homodimers and heterodimers with CASTOR2 (By similarity). Interacts with the GATOR2 complex which is composed of MIOS, SEC13, SEH1L, WDR24 and WDR59; the interaction is negatively regulated by arginine (By similarity). Interacts with TM4SF5; the interaction is positively regulated by leucine and is negatively regulated by arginine (By similarity).</text>
</comment>
<comment type="subcellular location">
    <subcellularLocation>
        <location evidence="1">Cytoplasm</location>
        <location evidence="1">Cytosol</location>
    </subcellularLocation>
</comment>
<comment type="domain">
    <text evidence="1">Based on x-ray crystallography data, the protein would be constituted of 4 tandem ACT domains instead of the 2 predicted from the sequence.</text>
</comment>
<comment type="PTM">
    <text evidence="1">Phosphorylation at Ser-14 by AKT1, promoting the interaction between CASTOR1 and RNF167.</text>
</comment>
<comment type="PTM">
    <text evidence="1">Ubiquitinated by RNF167 via 'Lys-29'-polyubiquitination, leading to its degradation, releasing the GATOR2 complex. Ubiquitination by RNF167 is promoted by phosphorylation at Ser-14 by AKT1.</text>
</comment>
<comment type="similarity">
    <text evidence="3">Belongs to the GATS family.</text>
</comment>